<proteinExistence type="inferred from homology"/>
<organism>
    <name type="scientific">Rhodopseudomonas palustris (strain ATCC BAA-98 / CGA009)</name>
    <dbReference type="NCBI Taxonomy" id="258594"/>
    <lineage>
        <taxon>Bacteria</taxon>
        <taxon>Pseudomonadati</taxon>
        <taxon>Pseudomonadota</taxon>
        <taxon>Alphaproteobacteria</taxon>
        <taxon>Hyphomicrobiales</taxon>
        <taxon>Nitrobacteraceae</taxon>
        <taxon>Rhodopseudomonas</taxon>
    </lineage>
</organism>
<dbReference type="EMBL" id="BX572595">
    <property type="protein sequence ID" value="CAE26290.1"/>
    <property type="molecule type" value="Genomic_DNA"/>
</dbReference>
<dbReference type="RefSeq" id="WP_011156597.1">
    <property type="nucleotide sequence ID" value="NZ_CP116810.1"/>
</dbReference>
<dbReference type="SMR" id="Q6NBI2"/>
<dbReference type="STRING" id="258594.RPA0846"/>
<dbReference type="GeneID" id="66891863"/>
<dbReference type="eggNOG" id="COG0356">
    <property type="taxonomic scope" value="Bacteria"/>
</dbReference>
<dbReference type="HOGENOM" id="CLU_041018_0_2_5"/>
<dbReference type="PhylomeDB" id="Q6NBI2"/>
<dbReference type="GO" id="GO:0005886">
    <property type="term" value="C:plasma membrane"/>
    <property type="evidence" value="ECO:0007669"/>
    <property type="project" value="UniProtKB-SubCell"/>
</dbReference>
<dbReference type="GO" id="GO:0045259">
    <property type="term" value="C:proton-transporting ATP synthase complex"/>
    <property type="evidence" value="ECO:0007669"/>
    <property type="project" value="UniProtKB-KW"/>
</dbReference>
<dbReference type="GO" id="GO:0046933">
    <property type="term" value="F:proton-transporting ATP synthase activity, rotational mechanism"/>
    <property type="evidence" value="ECO:0007669"/>
    <property type="project" value="UniProtKB-UniRule"/>
</dbReference>
<dbReference type="CDD" id="cd00310">
    <property type="entry name" value="ATP-synt_Fo_a_6"/>
    <property type="match status" value="1"/>
</dbReference>
<dbReference type="FunFam" id="1.20.120.220:FF:000003">
    <property type="entry name" value="ATP synthase subunit a"/>
    <property type="match status" value="1"/>
</dbReference>
<dbReference type="Gene3D" id="1.20.120.220">
    <property type="entry name" value="ATP synthase, F0 complex, subunit A"/>
    <property type="match status" value="1"/>
</dbReference>
<dbReference type="HAMAP" id="MF_01393">
    <property type="entry name" value="ATP_synth_a_bact"/>
    <property type="match status" value="1"/>
</dbReference>
<dbReference type="InterPro" id="IPR000568">
    <property type="entry name" value="ATP_synth_F0_asu"/>
</dbReference>
<dbReference type="InterPro" id="IPR023011">
    <property type="entry name" value="ATP_synth_F0_asu_AS"/>
</dbReference>
<dbReference type="InterPro" id="IPR045083">
    <property type="entry name" value="ATP_synth_F0_asu_bact/mt"/>
</dbReference>
<dbReference type="InterPro" id="IPR035908">
    <property type="entry name" value="F0_ATP_A_sf"/>
</dbReference>
<dbReference type="NCBIfam" id="TIGR01131">
    <property type="entry name" value="ATP_synt_6_or_A"/>
    <property type="match status" value="1"/>
</dbReference>
<dbReference type="NCBIfam" id="NF004482">
    <property type="entry name" value="PRK05815.2-4"/>
    <property type="match status" value="1"/>
</dbReference>
<dbReference type="PANTHER" id="PTHR11410">
    <property type="entry name" value="ATP SYNTHASE SUBUNIT A"/>
    <property type="match status" value="1"/>
</dbReference>
<dbReference type="PANTHER" id="PTHR11410:SF0">
    <property type="entry name" value="ATP SYNTHASE SUBUNIT A"/>
    <property type="match status" value="1"/>
</dbReference>
<dbReference type="Pfam" id="PF00119">
    <property type="entry name" value="ATP-synt_A"/>
    <property type="match status" value="1"/>
</dbReference>
<dbReference type="PRINTS" id="PR00123">
    <property type="entry name" value="ATPASEA"/>
</dbReference>
<dbReference type="SUPFAM" id="SSF81336">
    <property type="entry name" value="F1F0 ATP synthase subunit A"/>
    <property type="match status" value="1"/>
</dbReference>
<dbReference type="PROSITE" id="PS00449">
    <property type="entry name" value="ATPASE_A"/>
    <property type="match status" value="1"/>
</dbReference>
<protein>
    <recommendedName>
        <fullName evidence="1">ATP synthase subunit a</fullName>
    </recommendedName>
    <alternativeName>
        <fullName evidence="1">ATP synthase F0 sector subunit a</fullName>
    </alternativeName>
    <alternativeName>
        <fullName evidence="1">F-ATPase subunit 6</fullName>
    </alternativeName>
</protein>
<gene>
    <name evidence="1" type="primary">atpB</name>
    <name type="ordered locus">RPA0846</name>
</gene>
<accession>Q6NBI2</accession>
<reference key="1">
    <citation type="journal article" date="2004" name="Nat. Biotechnol.">
        <title>Complete genome sequence of the metabolically versatile photosynthetic bacterium Rhodopseudomonas palustris.</title>
        <authorList>
            <person name="Larimer F.W."/>
            <person name="Chain P."/>
            <person name="Hauser L."/>
            <person name="Lamerdin J.E."/>
            <person name="Malfatti S."/>
            <person name="Do L."/>
            <person name="Land M.L."/>
            <person name="Pelletier D.A."/>
            <person name="Beatty J.T."/>
            <person name="Lang A.S."/>
            <person name="Tabita F.R."/>
            <person name="Gibson J.L."/>
            <person name="Hanson T.E."/>
            <person name="Bobst C."/>
            <person name="Torres y Torres J.L."/>
            <person name="Peres C."/>
            <person name="Harrison F.H."/>
            <person name="Gibson J."/>
            <person name="Harwood C.S."/>
        </authorList>
    </citation>
    <scope>NUCLEOTIDE SEQUENCE [LARGE SCALE GENOMIC DNA]</scope>
    <source>
        <strain>ATCC BAA-98 / CGA009</strain>
    </source>
</reference>
<comment type="function">
    <text evidence="1">Key component of the proton channel; it plays a direct role in the translocation of protons across the membrane.</text>
</comment>
<comment type="subunit">
    <text evidence="1">F-type ATPases have 2 components, CF(1) - the catalytic core - and CF(0) - the membrane proton channel. CF(1) has five subunits: alpha(3), beta(3), gamma(1), delta(1), epsilon(1). CF(0) has four main subunits: a, b, b' and c.</text>
</comment>
<comment type="subcellular location">
    <subcellularLocation>
        <location evidence="1">Cell inner membrane</location>
        <topology evidence="1">Multi-pass membrane protein</topology>
    </subcellularLocation>
</comment>
<comment type="similarity">
    <text evidence="1">Belongs to the ATPase A chain family.</text>
</comment>
<sequence length="248" mass="26951">MAADPIHQFQITKLFTLGHVGGQEIAFTNSSAYMFGTVALIAILMLVPGRQLVPGRLQSIAELSYEFVANMIRSTAGKEGLKFFPLVFSLFMFIAVSNLIGIVPYTFTVSSHLIVTVALALLVFFTVLIYGFSKNGLKFFKLFVPSGVPIYILPLVVFIEVISFFLKPVSHSVRLFANMLAGHIALKVFASFVAMLGALGVVGWFGAVLPLGLTIALTALELLVAFLQAYVFAILTCIYLNDAIHPGH</sequence>
<feature type="chain" id="PRO_0000362417" description="ATP synthase subunit a">
    <location>
        <begin position="1"/>
        <end position="248"/>
    </location>
</feature>
<feature type="transmembrane region" description="Helical" evidence="1">
    <location>
        <begin position="27"/>
        <end position="47"/>
    </location>
</feature>
<feature type="transmembrane region" description="Helical" evidence="1">
    <location>
        <begin position="83"/>
        <end position="103"/>
    </location>
</feature>
<feature type="transmembrane region" description="Helical" evidence="1">
    <location>
        <begin position="113"/>
        <end position="133"/>
    </location>
</feature>
<feature type="transmembrane region" description="Helical" evidence="1">
    <location>
        <begin position="142"/>
        <end position="162"/>
    </location>
</feature>
<feature type="transmembrane region" description="Helical" evidence="1">
    <location>
        <begin position="192"/>
        <end position="212"/>
    </location>
</feature>
<feature type="transmembrane region" description="Helical" evidence="1">
    <location>
        <begin position="215"/>
        <end position="235"/>
    </location>
</feature>
<keyword id="KW-0066">ATP synthesis</keyword>
<keyword id="KW-0997">Cell inner membrane</keyword>
<keyword id="KW-1003">Cell membrane</keyword>
<keyword id="KW-0138">CF(0)</keyword>
<keyword id="KW-0375">Hydrogen ion transport</keyword>
<keyword id="KW-0406">Ion transport</keyword>
<keyword id="KW-0472">Membrane</keyword>
<keyword id="KW-0812">Transmembrane</keyword>
<keyword id="KW-1133">Transmembrane helix</keyword>
<keyword id="KW-0813">Transport</keyword>
<name>ATP6_RHOPA</name>
<evidence type="ECO:0000255" key="1">
    <source>
        <dbReference type="HAMAP-Rule" id="MF_01393"/>
    </source>
</evidence>